<gene>
    <name type="ordered locus">BPUM_2377</name>
</gene>
<evidence type="ECO:0000255" key="1">
    <source>
        <dbReference type="HAMAP-Rule" id="MF_01448"/>
    </source>
</evidence>
<name>Y2377_BACP2</name>
<reference key="1">
    <citation type="journal article" date="2007" name="PLoS ONE">
        <title>Paradoxical DNA repair and peroxide resistance gene conservation in Bacillus pumilus SAFR-032.</title>
        <authorList>
            <person name="Gioia J."/>
            <person name="Yerrapragada S."/>
            <person name="Qin X."/>
            <person name="Jiang H."/>
            <person name="Igboeli O.C."/>
            <person name="Muzny D."/>
            <person name="Dugan-Rocha S."/>
            <person name="Ding Y."/>
            <person name="Hawes A."/>
            <person name="Liu W."/>
            <person name="Perez L."/>
            <person name="Kovar C."/>
            <person name="Dinh H."/>
            <person name="Lee S."/>
            <person name="Nazareth L."/>
            <person name="Blyth P."/>
            <person name="Holder M."/>
            <person name="Buhay C."/>
            <person name="Tirumalai M.R."/>
            <person name="Liu Y."/>
            <person name="Dasgupta I."/>
            <person name="Bokhetache L."/>
            <person name="Fujita M."/>
            <person name="Karouia F."/>
            <person name="Eswara Moorthy P."/>
            <person name="Siefert J."/>
            <person name="Uzman A."/>
            <person name="Buzumbo P."/>
            <person name="Verma A."/>
            <person name="Zwiya H."/>
            <person name="McWilliams B.D."/>
            <person name="Olowu A."/>
            <person name="Clinkenbeard K.D."/>
            <person name="Newcombe D."/>
            <person name="Golebiewski L."/>
            <person name="Petrosino J.F."/>
            <person name="Nicholson W.L."/>
            <person name="Fox G.E."/>
            <person name="Venkateswaran K."/>
            <person name="Highlander S.K."/>
            <person name="Weinstock G.M."/>
        </authorList>
    </citation>
    <scope>NUCLEOTIDE SEQUENCE [LARGE SCALE GENOMIC DNA]</scope>
    <source>
        <strain>SAFR-032</strain>
    </source>
</reference>
<organism>
    <name type="scientific">Bacillus pumilus (strain SAFR-032)</name>
    <dbReference type="NCBI Taxonomy" id="315750"/>
    <lineage>
        <taxon>Bacteria</taxon>
        <taxon>Bacillati</taxon>
        <taxon>Bacillota</taxon>
        <taxon>Bacilli</taxon>
        <taxon>Bacillales</taxon>
        <taxon>Bacillaceae</taxon>
        <taxon>Bacillus</taxon>
    </lineage>
</organism>
<proteinExistence type="inferred from homology"/>
<protein>
    <recommendedName>
        <fullName evidence="1">UPF0473 protein BPUM_2377</fullName>
    </recommendedName>
</protein>
<comment type="similarity">
    <text evidence="1">Belongs to the UPF0473 family.</text>
</comment>
<accession>A8FFM6</accession>
<feature type="chain" id="PRO_1000068578" description="UPF0473 protein BPUM_2377">
    <location>
        <begin position="1"/>
        <end position="95"/>
    </location>
</feature>
<sequence length="95" mass="11181">MEHGEKQITIVDDNGNEQLCEVLFTFESDHFNKSYVLYYPISEQDNEEIEIHASSFTPNENGEDGELEPIETDEEWDMIEETLNTFLDQEEEDEE</sequence>
<dbReference type="EMBL" id="CP000813">
    <property type="protein sequence ID" value="ABV63043.1"/>
    <property type="molecule type" value="Genomic_DNA"/>
</dbReference>
<dbReference type="RefSeq" id="WP_012010715.1">
    <property type="nucleotide sequence ID" value="NZ_VEIS01000010.1"/>
</dbReference>
<dbReference type="STRING" id="315750.BPUM_2377"/>
<dbReference type="GeneID" id="5621641"/>
<dbReference type="KEGG" id="bpu:BPUM_2377"/>
<dbReference type="eggNOG" id="COG3906">
    <property type="taxonomic scope" value="Bacteria"/>
</dbReference>
<dbReference type="HOGENOM" id="CLU_146610_2_1_9"/>
<dbReference type="OrthoDB" id="2086132at2"/>
<dbReference type="Proteomes" id="UP000001355">
    <property type="component" value="Chromosome"/>
</dbReference>
<dbReference type="HAMAP" id="MF_01448">
    <property type="entry name" value="UPF0473"/>
    <property type="match status" value="1"/>
</dbReference>
<dbReference type="InterPro" id="IPR009711">
    <property type="entry name" value="UPF0473"/>
</dbReference>
<dbReference type="NCBIfam" id="NF010217">
    <property type="entry name" value="PRK13678.1-4"/>
    <property type="match status" value="1"/>
</dbReference>
<dbReference type="NCBIfam" id="NF010219">
    <property type="entry name" value="PRK13678.2-2"/>
    <property type="match status" value="1"/>
</dbReference>
<dbReference type="NCBIfam" id="NF010221">
    <property type="entry name" value="PRK13678.2-4"/>
    <property type="match status" value="1"/>
</dbReference>
<dbReference type="PANTHER" id="PTHR40066">
    <property type="entry name" value="UPF0473 PROTEIN CBO2561/CLC_2432"/>
    <property type="match status" value="1"/>
</dbReference>
<dbReference type="PANTHER" id="PTHR40066:SF1">
    <property type="entry name" value="UPF0473 PROTEIN CBO2561_CLC_2432"/>
    <property type="match status" value="1"/>
</dbReference>
<dbReference type="Pfam" id="PF06949">
    <property type="entry name" value="DUF1292"/>
    <property type="match status" value="1"/>
</dbReference>